<comment type="function">
    <text evidence="1">Catalyzes the decarboxylation of four acetate groups of uroporphyrinogen-III to yield coproporphyrinogen-III.</text>
</comment>
<comment type="catalytic activity">
    <reaction evidence="1">
        <text>uroporphyrinogen III + 4 H(+) = coproporphyrinogen III + 4 CO2</text>
        <dbReference type="Rhea" id="RHEA:19865"/>
        <dbReference type="ChEBI" id="CHEBI:15378"/>
        <dbReference type="ChEBI" id="CHEBI:16526"/>
        <dbReference type="ChEBI" id="CHEBI:57308"/>
        <dbReference type="ChEBI" id="CHEBI:57309"/>
        <dbReference type="EC" id="4.1.1.37"/>
    </reaction>
</comment>
<comment type="pathway">
    <text evidence="1">Porphyrin-containing compound metabolism; protoporphyrin-IX biosynthesis; coproporphyrinogen-III from 5-aminolevulinate: step 4/4.</text>
</comment>
<comment type="subunit">
    <text evidence="1">Homodimer.</text>
</comment>
<comment type="subcellular location">
    <subcellularLocation>
        <location evidence="1">Cytoplasm</location>
    </subcellularLocation>
</comment>
<comment type="similarity">
    <text evidence="1">Belongs to the uroporphyrinogen decarboxylase family.</text>
</comment>
<keyword id="KW-0963">Cytoplasm</keyword>
<keyword id="KW-0210">Decarboxylase</keyword>
<keyword id="KW-0456">Lyase</keyword>
<keyword id="KW-0627">Porphyrin biosynthesis</keyword>
<keyword id="KW-1185">Reference proteome</keyword>
<name>DCUP_PARUW</name>
<protein>
    <recommendedName>
        <fullName evidence="1">Uroporphyrinogen decarboxylase</fullName>
        <shortName evidence="1">UPD</shortName>
        <shortName evidence="1">URO-D</shortName>
        <ecNumber evidence="1">4.1.1.37</ecNumber>
    </recommendedName>
</protein>
<dbReference type="EC" id="4.1.1.37" evidence="1"/>
<dbReference type="EMBL" id="BX908798">
    <property type="protein sequence ID" value="CAF24237.1"/>
    <property type="molecule type" value="Genomic_DNA"/>
</dbReference>
<dbReference type="SMR" id="Q6MB12"/>
<dbReference type="STRING" id="264201.pc1513"/>
<dbReference type="eggNOG" id="COG0407">
    <property type="taxonomic scope" value="Bacteria"/>
</dbReference>
<dbReference type="HOGENOM" id="CLU_040933_0_0_0"/>
<dbReference type="UniPathway" id="UPA00251">
    <property type="reaction ID" value="UER00321"/>
</dbReference>
<dbReference type="Proteomes" id="UP000000529">
    <property type="component" value="Chromosome"/>
</dbReference>
<dbReference type="GO" id="GO:0005829">
    <property type="term" value="C:cytosol"/>
    <property type="evidence" value="ECO:0007669"/>
    <property type="project" value="TreeGrafter"/>
</dbReference>
<dbReference type="GO" id="GO:0004853">
    <property type="term" value="F:uroporphyrinogen decarboxylase activity"/>
    <property type="evidence" value="ECO:0007669"/>
    <property type="project" value="UniProtKB-UniRule"/>
</dbReference>
<dbReference type="GO" id="GO:0006782">
    <property type="term" value="P:protoporphyrinogen IX biosynthetic process"/>
    <property type="evidence" value="ECO:0007669"/>
    <property type="project" value="UniProtKB-UniRule"/>
</dbReference>
<dbReference type="CDD" id="cd00717">
    <property type="entry name" value="URO-D"/>
    <property type="match status" value="1"/>
</dbReference>
<dbReference type="FunFam" id="3.20.20.210:FF:000008">
    <property type="entry name" value="Uroporphyrinogen decarboxylase"/>
    <property type="match status" value="1"/>
</dbReference>
<dbReference type="Gene3D" id="3.20.20.210">
    <property type="match status" value="1"/>
</dbReference>
<dbReference type="HAMAP" id="MF_00218">
    <property type="entry name" value="URO_D"/>
    <property type="match status" value="1"/>
</dbReference>
<dbReference type="InterPro" id="IPR038071">
    <property type="entry name" value="UROD/MetE-like_sf"/>
</dbReference>
<dbReference type="InterPro" id="IPR006361">
    <property type="entry name" value="Uroporphyrinogen_deCO2ase_HemE"/>
</dbReference>
<dbReference type="InterPro" id="IPR000257">
    <property type="entry name" value="Uroporphyrinogen_deCOase"/>
</dbReference>
<dbReference type="NCBIfam" id="TIGR01464">
    <property type="entry name" value="hemE"/>
    <property type="match status" value="1"/>
</dbReference>
<dbReference type="PANTHER" id="PTHR21091">
    <property type="entry name" value="METHYLTETRAHYDROFOLATE:HOMOCYSTEINE METHYLTRANSFERASE RELATED"/>
    <property type="match status" value="1"/>
</dbReference>
<dbReference type="PANTHER" id="PTHR21091:SF169">
    <property type="entry name" value="UROPORPHYRINOGEN DECARBOXYLASE"/>
    <property type="match status" value="1"/>
</dbReference>
<dbReference type="Pfam" id="PF01208">
    <property type="entry name" value="URO-D"/>
    <property type="match status" value="1"/>
</dbReference>
<dbReference type="SUPFAM" id="SSF51726">
    <property type="entry name" value="UROD/MetE-like"/>
    <property type="match status" value="1"/>
</dbReference>
<dbReference type="PROSITE" id="PS00906">
    <property type="entry name" value="UROD_1"/>
    <property type="match status" value="1"/>
</dbReference>
<dbReference type="PROSITE" id="PS00907">
    <property type="entry name" value="UROD_2"/>
    <property type="match status" value="1"/>
</dbReference>
<proteinExistence type="inferred from homology"/>
<gene>
    <name evidence="1" type="primary">hemE</name>
    <name type="ordered locus">pc1513</name>
</gene>
<reference key="1">
    <citation type="journal article" date="2004" name="Science">
        <title>Illuminating the evolutionary history of chlamydiae.</title>
        <authorList>
            <person name="Horn M."/>
            <person name="Collingro A."/>
            <person name="Schmitz-Esser S."/>
            <person name="Beier C.L."/>
            <person name="Purkhold U."/>
            <person name="Fartmann B."/>
            <person name="Brandt P."/>
            <person name="Nyakatura G.J."/>
            <person name="Droege M."/>
            <person name="Frishman D."/>
            <person name="Rattei T."/>
            <person name="Mewes H.-W."/>
            <person name="Wagner M."/>
        </authorList>
    </citation>
    <scope>NUCLEOTIDE SEQUENCE [LARGE SCALE GENOMIC DNA]</scope>
    <source>
        <strain>UWE25</strain>
    </source>
</reference>
<feature type="chain" id="PRO_0000325675" description="Uroporphyrinogen decarboxylase">
    <location>
        <begin position="1"/>
        <end position="364"/>
    </location>
</feature>
<feature type="binding site" evidence="1">
    <location>
        <begin position="49"/>
        <end position="53"/>
    </location>
    <ligand>
        <name>substrate</name>
    </ligand>
</feature>
<feature type="binding site" evidence="1">
    <location>
        <position position="98"/>
    </location>
    <ligand>
        <name>substrate</name>
    </ligand>
</feature>
<feature type="binding site" evidence="1">
    <location>
        <position position="173"/>
    </location>
    <ligand>
        <name>substrate</name>
    </ligand>
</feature>
<feature type="binding site" evidence="1">
    <location>
        <position position="228"/>
    </location>
    <ligand>
        <name>substrate</name>
    </ligand>
</feature>
<feature type="binding site" evidence="1">
    <location>
        <position position="341"/>
    </location>
    <ligand>
        <name>substrate</name>
    </ligand>
</feature>
<feature type="site" description="Transition state stabilizer" evidence="1">
    <location>
        <position position="98"/>
    </location>
</feature>
<organism>
    <name type="scientific">Protochlamydia amoebophila (strain UWE25)</name>
    <dbReference type="NCBI Taxonomy" id="264201"/>
    <lineage>
        <taxon>Bacteria</taxon>
        <taxon>Pseudomonadati</taxon>
        <taxon>Chlamydiota</taxon>
        <taxon>Chlamydiia</taxon>
        <taxon>Parachlamydiales</taxon>
        <taxon>Parachlamydiaceae</taxon>
        <taxon>Candidatus Protochlamydia</taxon>
    </lineage>
</organism>
<accession>Q6MB12</accession>
<sequence>MRLYLNVFYSQKNAPNSVVSNIISSSFNDRLLQALQCRNNSRPPVWLMRQAGRHLASYRALREKYSFLDMCHNPELIAEVTLLPIEAYQVDAAILFSDILVIPEALKVGVRFEDKVGPIIEKPITNLHDIEKLAMPEDLTSLEFVKEGIRCLQPRLNVPLIGFCGAPFTVASYMIEGKTSRDFKKIKHWMYHEPQGFHTLLRKIADWSIAYLNMQIDAGVHALQIFDSWANTLSYRQFQEFSLNYLKYILKGLKKDIPLILFCRGSSVFGPDLASIKPAAVGLDWNCRVKRMRDVIPYPIALQGNLDPDLLYAPLPKIREEVNALLDEMEGDRGFILNLGHGIFPDVSEEAVRTLVETVRERRG</sequence>
<evidence type="ECO:0000255" key="1">
    <source>
        <dbReference type="HAMAP-Rule" id="MF_00218"/>
    </source>
</evidence>